<accession>P68163</accession>
<accession>P83521</accession>
<organism>
    <name type="scientific">Datura inoxia</name>
    <name type="common">Downy thornapple</name>
    <name type="synonym">Datura meteloides</name>
    <dbReference type="NCBI Taxonomy" id="4075"/>
    <lineage>
        <taxon>Eukaryota</taxon>
        <taxon>Viridiplantae</taxon>
        <taxon>Streptophyta</taxon>
        <taxon>Embryophyta</taxon>
        <taxon>Tracheophyta</taxon>
        <taxon>Spermatophyta</taxon>
        <taxon>Magnoliopsida</taxon>
        <taxon>eudicotyledons</taxon>
        <taxon>Gunneridae</taxon>
        <taxon>Pentapetalae</taxon>
        <taxon>asterids</taxon>
        <taxon>lamiids</taxon>
        <taxon>Solanales</taxon>
        <taxon>Solanaceae</taxon>
        <taxon>Solanoideae</taxon>
        <taxon>Datureae</taxon>
        <taxon>Datura</taxon>
    </lineage>
</organism>
<evidence type="ECO:0000255" key="1">
    <source>
        <dbReference type="PROSITE-ProRule" id="PRU00465"/>
    </source>
</evidence>
<evidence type="ECO:0000269" key="2">
    <source>
    </source>
</evidence>
<evidence type="ECO:0000305" key="3"/>
<comment type="function">
    <text evidence="2">Ferredoxins are iron-sulfur proteins that transfer electrons in a wide variety of metabolic reactions.</text>
</comment>
<comment type="cofactor">
    <cofactor evidence="2">
        <name>[2Fe-2S] cluster</name>
        <dbReference type="ChEBI" id="CHEBI:190135"/>
    </cofactor>
    <text evidence="2">Binds 1 [2Fe-2S] cluster.</text>
</comment>
<comment type="subcellular location">
    <subcellularLocation>
        <location evidence="2">Plastid</location>
        <location evidence="2">Chloroplast</location>
    </subcellularLocation>
</comment>
<comment type="similarity">
    <text evidence="3">Belongs to the 2Fe2S plant-type ferredoxin family.</text>
</comment>
<keyword id="KW-0001">2Fe-2S</keyword>
<keyword id="KW-0150">Chloroplast</keyword>
<keyword id="KW-0903">Direct protein sequencing</keyword>
<keyword id="KW-0249">Electron transport</keyword>
<keyword id="KW-0408">Iron</keyword>
<keyword id="KW-0411">Iron-sulfur</keyword>
<keyword id="KW-0479">Metal-binding</keyword>
<keyword id="KW-0934">Plastid</keyword>
<keyword id="KW-0813">Transport</keyword>
<reference key="1">
    <citation type="journal article" date="1994" name="Phytochemistry">
        <title>Identical amino acid sequence of ferredoxin from Datura metel and D. innoxia.</title>
        <authorList>
            <person name="Mino Y."/>
        </authorList>
    </citation>
    <scope>PROTEIN SEQUENCE</scope>
    <scope>FUNCTION</scope>
    <scope>COFACTOR</scope>
    <scope>SUBCELLULAR LOCATION</scope>
    <source>
        <tissue>Leaf</tissue>
    </source>
</reference>
<sequence>ATYKVKLVTPDGPVEFDCPDDVYILDRAEEEGHDLPYSCRAGSCSSCAGKVTAGTVDQSDGNYLDDDQMAEGFVLTCVAYPQSDVTIETHKEEELTG</sequence>
<feature type="chain" id="PRO_0000189322" description="Ferredoxin">
    <location>
        <begin position="1"/>
        <end position="97"/>
    </location>
</feature>
<feature type="domain" description="2Fe-2S ferredoxin-type" evidence="1">
    <location>
        <begin position="3"/>
        <end position="93"/>
    </location>
</feature>
<feature type="binding site" evidence="1">
    <location>
        <position position="39"/>
    </location>
    <ligand>
        <name>[2Fe-2S] cluster</name>
        <dbReference type="ChEBI" id="CHEBI:190135"/>
    </ligand>
</feature>
<feature type="binding site" evidence="1">
    <location>
        <position position="44"/>
    </location>
    <ligand>
        <name>[2Fe-2S] cluster</name>
        <dbReference type="ChEBI" id="CHEBI:190135"/>
    </ligand>
</feature>
<feature type="binding site" evidence="1">
    <location>
        <position position="47"/>
    </location>
    <ligand>
        <name>[2Fe-2S] cluster</name>
        <dbReference type="ChEBI" id="CHEBI:190135"/>
    </ligand>
</feature>
<feature type="binding site" evidence="1">
    <location>
        <position position="77"/>
    </location>
    <ligand>
        <name>[2Fe-2S] cluster</name>
        <dbReference type="ChEBI" id="CHEBI:190135"/>
    </ligand>
</feature>
<name>FER_DATIN</name>
<proteinExistence type="evidence at protein level"/>
<protein>
    <recommendedName>
        <fullName>Ferredoxin</fullName>
    </recommendedName>
</protein>
<dbReference type="SMR" id="P68163"/>
<dbReference type="GO" id="GO:0009507">
    <property type="term" value="C:chloroplast"/>
    <property type="evidence" value="ECO:0000304"/>
    <property type="project" value="UniProtKB"/>
</dbReference>
<dbReference type="GO" id="GO:0009570">
    <property type="term" value="C:chloroplast stroma"/>
    <property type="evidence" value="ECO:0007669"/>
    <property type="project" value="TreeGrafter"/>
</dbReference>
<dbReference type="GO" id="GO:0051537">
    <property type="term" value="F:2 iron, 2 sulfur cluster binding"/>
    <property type="evidence" value="ECO:0007669"/>
    <property type="project" value="UniProtKB-KW"/>
</dbReference>
<dbReference type="GO" id="GO:0009055">
    <property type="term" value="F:electron transfer activity"/>
    <property type="evidence" value="ECO:0000304"/>
    <property type="project" value="UniProtKB"/>
</dbReference>
<dbReference type="GO" id="GO:0008198">
    <property type="term" value="F:ferrous iron binding"/>
    <property type="evidence" value="ECO:0000304"/>
    <property type="project" value="UniProtKB"/>
</dbReference>
<dbReference type="GO" id="GO:0022900">
    <property type="term" value="P:electron transport chain"/>
    <property type="evidence" value="ECO:0007669"/>
    <property type="project" value="InterPro"/>
</dbReference>
<dbReference type="GO" id="GO:0006124">
    <property type="term" value="P:ferredoxin metabolic process"/>
    <property type="evidence" value="ECO:0000304"/>
    <property type="project" value="UniProtKB"/>
</dbReference>
<dbReference type="CDD" id="cd00207">
    <property type="entry name" value="fer2"/>
    <property type="match status" value="1"/>
</dbReference>
<dbReference type="FunFam" id="3.10.20.30:FF:000014">
    <property type="entry name" value="Ferredoxin"/>
    <property type="match status" value="1"/>
</dbReference>
<dbReference type="Gene3D" id="3.10.20.30">
    <property type="match status" value="1"/>
</dbReference>
<dbReference type="InterPro" id="IPR036010">
    <property type="entry name" value="2Fe-2S_ferredoxin-like_sf"/>
</dbReference>
<dbReference type="InterPro" id="IPR001041">
    <property type="entry name" value="2Fe-2S_ferredoxin-type"/>
</dbReference>
<dbReference type="InterPro" id="IPR006058">
    <property type="entry name" value="2Fe2S_fd_BS"/>
</dbReference>
<dbReference type="InterPro" id="IPR012675">
    <property type="entry name" value="Beta-grasp_dom_sf"/>
</dbReference>
<dbReference type="InterPro" id="IPR010241">
    <property type="entry name" value="Fd_pln"/>
</dbReference>
<dbReference type="NCBIfam" id="TIGR02008">
    <property type="entry name" value="fdx_plant"/>
    <property type="match status" value="1"/>
</dbReference>
<dbReference type="PANTHER" id="PTHR43112">
    <property type="entry name" value="FERREDOXIN"/>
    <property type="match status" value="1"/>
</dbReference>
<dbReference type="PANTHER" id="PTHR43112:SF3">
    <property type="entry name" value="FERREDOXIN-2, CHLOROPLASTIC"/>
    <property type="match status" value="1"/>
</dbReference>
<dbReference type="Pfam" id="PF00111">
    <property type="entry name" value="Fer2"/>
    <property type="match status" value="1"/>
</dbReference>
<dbReference type="SUPFAM" id="SSF54292">
    <property type="entry name" value="2Fe-2S ferredoxin-like"/>
    <property type="match status" value="1"/>
</dbReference>
<dbReference type="PROSITE" id="PS00197">
    <property type="entry name" value="2FE2S_FER_1"/>
    <property type="match status" value="1"/>
</dbReference>
<dbReference type="PROSITE" id="PS51085">
    <property type="entry name" value="2FE2S_FER_2"/>
    <property type="match status" value="1"/>
</dbReference>